<name>CD8B_MOUSE</name>
<keyword id="KW-0002">3D-structure</keyword>
<keyword id="KW-1064">Adaptive immunity</keyword>
<keyword id="KW-1015">Disulfide bond</keyword>
<keyword id="KW-0325">Glycoprotein</keyword>
<keyword id="KW-0391">Immunity</keyword>
<keyword id="KW-0393">Immunoglobulin domain</keyword>
<keyword id="KW-0472">Membrane</keyword>
<keyword id="KW-1185">Reference proteome</keyword>
<keyword id="KW-0732">Signal</keyword>
<keyword id="KW-0812">Transmembrane</keyword>
<keyword id="KW-1133">Transmembrane helix</keyword>
<sequence length="213" mass="24288">MQPWLWLVFSMKLAALWSSSALIQTPSSLLVQTNHTAKMSCEVKSISKLTSIYWLRERQDPKDKYFEFLASWSSSKGVLYGESVDKKRNIILESSDSRRPFLSIMNVKPEDSDFYFCATVGSPKMVFGTGTKLTVVDVLPTTAPTKKTTLKMKKKKQCPFPHPETQKGLTCSLTTLSLLVVCILLLLAFLGVAVYFYCVRRRARIHFMKQFHK</sequence>
<evidence type="ECO:0000250" key="1">
    <source>
        <dbReference type="UniProtKB" id="P10966"/>
    </source>
</evidence>
<evidence type="ECO:0000255" key="2"/>
<evidence type="ECO:0000255" key="3">
    <source>
        <dbReference type="PROSITE-ProRule" id="PRU00114"/>
    </source>
</evidence>
<evidence type="ECO:0000269" key="4">
    <source>
    </source>
</evidence>
<evidence type="ECO:0000269" key="5">
    <source>
    </source>
</evidence>
<evidence type="ECO:0000269" key="6">
    <source>
    </source>
</evidence>
<evidence type="ECO:0000269" key="7">
    <source>
    </source>
</evidence>
<evidence type="ECO:0000269" key="8">
    <source>
    </source>
</evidence>
<evidence type="ECO:0000269" key="9">
    <source>
    </source>
</evidence>
<evidence type="ECO:0007829" key="10">
    <source>
        <dbReference type="PDB" id="2ATP"/>
    </source>
</evidence>
<evidence type="ECO:0007829" key="11">
    <source>
        <dbReference type="PDB" id="3B9K"/>
    </source>
</evidence>
<feature type="signal peptide">
    <location>
        <begin position="1"/>
        <end position="21"/>
    </location>
</feature>
<feature type="chain" id="PRO_0000014644" description="T-cell surface glycoprotein CD8 beta chain">
    <location>
        <begin position="22"/>
        <end position="213"/>
    </location>
</feature>
<feature type="topological domain" description="Extracellular" evidence="2">
    <location>
        <begin position="22"/>
        <end position="175"/>
    </location>
</feature>
<feature type="transmembrane region" description="Helical" evidence="2">
    <location>
        <begin position="176"/>
        <end position="196"/>
    </location>
</feature>
<feature type="topological domain" description="Cytoplasmic" evidence="2">
    <location>
        <begin position="197"/>
        <end position="213"/>
    </location>
</feature>
<feature type="domain" description="Ig-like V-type">
    <location>
        <begin position="22"/>
        <end position="133"/>
    </location>
</feature>
<feature type="glycosylation site" description="N-linked (GlcNAc...) asparagine" evidence="2">
    <location>
        <position position="34"/>
    </location>
</feature>
<feature type="disulfide bond" evidence="3 5 6">
    <location>
        <begin position="41"/>
        <end position="117"/>
    </location>
</feature>
<feature type="sequence variant" description="In allele Lyt-3A.">
    <original>R</original>
    <variation>S</variation>
    <location>
        <position position="98"/>
    </location>
</feature>
<feature type="sequence variant" description="In allele Lyt-3-alpha.">
    <location>
        <begin position="122"/>
        <end position="200"/>
    </location>
</feature>
<feature type="strand" evidence="10">
    <location>
        <begin position="22"/>
        <end position="25"/>
    </location>
</feature>
<feature type="strand" evidence="10">
    <location>
        <begin position="27"/>
        <end position="31"/>
    </location>
</feature>
<feature type="strand" evidence="10">
    <location>
        <begin position="37"/>
        <end position="43"/>
    </location>
</feature>
<feature type="strand" evidence="10">
    <location>
        <begin position="49"/>
        <end position="59"/>
    </location>
</feature>
<feature type="strand" evidence="11">
    <location>
        <begin position="60"/>
        <end position="63"/>
    </location>
</feature>
<feature type="strand" evidence="10">
    <location>
        <begin position="64"/>
        <end position="73"/>
    </location>
</feature>
<feature type="turn" evidence="10">
    <location>
        <begin position="74"/>
        <end position="76"/>
    </location>
</feature>
<feature type="strand" evidence="10">
    <location>
        <begin position="77"/>
        <end position="80"/>
    </location>
</feature>
<feature type="helix" evidence="10">
    <location>
        <begin position="82"/>
        <end position="84"/>
    </location>
</feature>
<feature type="turn" evidence="10">
    <location>
        <begin position="85"/>
        <end position="87"/>
    </location>
</feature>
<feature type="strand" evidence="10">
    <location>
        <begin position="90"/>
        <end position="94"/>
    </location>
</feature>
<feature type="strand" evidence="10">
    <location>
        <begin position="97"/>
        <end position="99"/>
    </location>
</feature>
<feature type="strand" evidence="10">
    <location>
        <begin position="101"/>
        <end position="104"/>
    </location>
</feature>
<feature type="helix" evidence="10">
    <location>
        <begin position="109"/>
        <end position="111"/>
    </location>
</feature>
<feature type="strand" evidence="10">
    <location>
        <begin position="113"/>
        <end position="120"/>
    </location>
</feature>
<feature type="strand" evidence="10">
    <location>
        <begin position="125"/>
        <end position="127"/>
    </location>
</feature>
<feature type="strand" evidence="10">
    <location>
        <begin position="131"/>
        <end position="135"/>
    </location>
</feature>
<proteinExistence type="evidence at protein level"/>
<dbReference type="EMBL" id="X07698">
    <property type="protein sequence ID" value="CAA30537.1"/>
    <property type="molecule type" value="mRNA"/>
</dbReference>
<dbReference type="EMBL" id="M19504">
    <property type="protein sequence ID" value="AAA39454.1"/>
    <property type="molecule type" value="mRNA"/>
</dbReference>
<dbReference type="EMBL" id="M26446">
    <property type="protein sequence ID" value="AAA39456.1"/>
    <property type="molecule type" value="Genomic_DNA"/>
</dbReference>
<dbReference type="EMBL" id="M26441">
    <property type="protein sequence ID" value="AAA39456.1"/>
    <property type="status" value="JOINED"/>
    <property type="molecule type" value="Genomic_DNA"/>
</dbReference>
<dbReference type="EMBL" id="M26442">
    <property type="protein sequence ID" value="AAA39456.1"/>
    <property type="status" value="JOINED"/>
    <property type="molecule type" value="Genomic_DNA"/>
</dbReference>
<dbReference type="EMBL" id="M26443">
    <property type="protein sequence ID" value="AAA39456.1"/>
    <property type="status" value="JOINED"/>
    <property type="molecule type" value="Genomic_DNA"/>
</dbReference>
<dbReference type="EMBL" id="M26444">
    <property type="protein sequence ID" value="AAA39456.1"/>
    <property type="status" value="JOINED"/>
    <property type="molecule type" value="Genomic_DNA"/>
</dbReference>
<dbReference type="EMBL" id="M26445">
    <property type="protein sequence ID" value="AAA39456.1"/>
    <property type="status" value="JOINED"/>
    <property type="molecule type" value="Genomic_DNA"/>
</dbReference>
<dbReference type="EMBL" id="M16799">
    <property type="protein sequence ID" value="AAA39479.1"/>
    <property type="molecule type" value="mRNA"/>
</dbReference>
<dbReference type="EMBL" id="M17534">
    <property type="protein sequence ID" value="AAA39455.1"/>
    <property type="molecule type" value="mRNA"/>
</dbReference>
<dbReference type="EMBL" id="U34882">
    <property type="protein sequence ID" value="AAA92534.1"/>
    <property type="molecule type" value="mRNA"/>
</dbReference>
<dbReference type="EMBL" id="M22070">
    <property type="protein sequence ID" value="AAA39480.1"/>
    <property type="molecule type" value="Genomic_DNA"/>
</dbReference>
<dbReference type="EMBL" id="M22065">
    <property type="protein sequence ID" value="AAA39480.1"/>
    <property type="status" value="JOINED"/>
    <property type="molecule type" value="Genomic_DNA"/>
</dbReference>
<dbReference type="EMBL" id="M22066">
    <property type="protein sequence ID" value="AAA39480.1"/>
    <property type="status" value="JOINED"/>
    <property type="molecule type" value="Genomic_DNA"/>
</dbReference>
<dbReference type="EMBL" id="M22067">
    <property type="protein sequence ID" value="AAA39480.1"/>
    <property type="status" value="JOINED"/>
    <property type="molecule type" value="Genomic_DNA"/>
</dbReference>
<dbReference type="EMBL" id="M22068">
    <property type="protein sequence ID" value="AAA39480.1"/>
    <property type="status" value="JOINED"/>
    <property type="molecule type" value="Genomic_DNA"/>
</dbReference>
<dbReference type="EMBL" id="M22069">
    <property type="protein sequence ID" value="AAA39480.1"/>
    <property type="status" value="JOINED"/>
    <property type="molecule type" value="Genomic_DNA"/>
</dbReference>
<dbReference type="EMBL" id="X07997">
    <property type="protein sequence ID" value="CAA30803.1"/>
    <property type="molecule type" value="mRNA"/>
</dbReference>
<dbReference type="CCDS" id="CCDS39506.1"/>
<dbReference type="PIR" id="A30585">
    <property type="entry name" value="A30585"/>
</dbReference>
<dbReference type="RefSeq" id="NP_033988.1">
    <property type="nucleotide sequence ID" value="NM_009858.2"/>
</dbReference>
<dbReference type="PDB" id="2ATP">
    <property type="method" value="X-ray"/>
    <property type="resolution" value="2.40 A"/>
    <property type="chains" value="B/D=22-136"/>
</dbReference>
<dbReference type="PDB" id="3B9K">
    <property type="method" value="X-ray"/>
    <property type="resolution" value="2.70 A"/>
    <property type="chains" value="B/F=22-138"/>
</dbReference>
<dbReference type="PDB" id="3DMM">
    <property type="method" value="X-ray"/>
    <property type="resolution" value="2.60 A"/>
    <property type="chains" value="D=19-168"/>
</dbReference>
<dbReference type="PDBsum" id="2ATP"/>
<dbReference type="PDBsum" id="3B9K"/>
<dbReference type="PDBsum" id="3DMM"/>
<dbReference type="SMR" id="P10300"/>
<dbReference type="ComplexPortal" id="CPX-6702">
    <property type="entry name" value="CD8alpha-beta complex"/>
</dbReference>
<dbReference type="FunCoup" id="P10300">
    <property type="interactions" value="909"/>
</dbReference>
<dbReference type="IntAct" id="P10300">
    <property type="interactions" value="3"/>
</dbReference>
<dbReference type="MINT" id="P10300"/>
<dbReference type="STRING" id="10090.ENSMUSP00000070131"/>
<dbReference type="GlyCosmos" id="P10300">
    <property type="glycosylation" value="1 site, No reported glycans"/>
</dbReference>
<dbReference type="GlyGen" id="P10300">
    <property type="glycosylation" value="1 site"/>
</dbReference>
<dbReference type="iPTMnet" id="P10300"/>
<dbReference type="PhosphoSitePlus" id="P10300"/>
<dbReference type="SwissPalm" id="P10300"/>
<dbReference type="PaxDb" id="10090-ENSMUSP00000070131"/>
<dbReference type="ProteomicsDB" id="265633"/>
<dbReference type="ABCD" id="P10300">
    <property type="antibodies" value="2 sequenced antibodies"/>
</dbReference>
<dbReference type="DNASU" id="12526"/>
<dbReference type="Ensembl" id="ENSMUST00000065248.9">
    <property type="protein sequence ID" value="ENSMUSP00000070131.8"/>
    <property type="gene ID" value="ENSMUSG00000053044.9"/>
</dbReference>
<dbReference type="GeneID" id="12526"/>
<dbReference type="KEGG" id="mmu:12526"/>
<dbReference type="UCSC" id="uc009cgp.1">
    <property type="organism name" value="mouse"/>
</dbReference>
<dbReference type="AGR" id="MGI:88347"/>
<dbReference type="CTD" id="12526"/>
<dbReference type="MGI" id="MGI:88347">
    <property type="gene designation" value="Cd8b1"/>
</dbReference>
<dbReference type="VEuPathDB" id="HostDB:ENSMUSG00000053044"/>
<dbReference type="eggNOG" id="ENOG502SANQ">
    <property type="taxonomic scope" value="Eukaryota"/>
</dbReference>
<dbReference type="GeneTree" id="ENSGT00510000048998"/>
<dbReference type="HOGENOM" id="CLU_089344_0_0_1"/>
<dbReference type="InParanoid" id="P10300"/>
<dbReference type="OMA" id="RLWLRIH"/>
<dbReference type="OrthoDB" id="9394844at2759"/>
<dbReference type="PhylomeDB" id="P10300"/>
<dbReference type="TreeFam" id="TF338028"/>
<dbReference type="Reactome" id="R-MMU-198933">
    <property type="pathway name" value="Immunoregulatory interactions between a Lymphoid and a non-Lymphoid cell"/>
</dbReference>
<dbReference type="BioGRID-ORCS" id="12526">
    <property type="hits" value="0 hits in 77 CRISPR screens"/>
</dbReference>
<dbReference type="ChiTaRS" id="Cd8b1">
    <property type="organism name" value="mouse"/>
</dbReference>
<dbReference type="EvolutionaryTrace" id="P10300"/>
<dbReference type="PRO" id="PR:P10300"/>
<dbReference type="Proteomes" id="UP000000589">
    <property type="component" value="Chromosome 6"/>
</dbReference>
<dbReference type="RNAct" id="P10300">
    <property type="molecule type" value="protein"/>
</dbReference>
<dbReference type="Bgee" id="ENSMUSG00000053044">
    <property type="expression patterns" value="Expressed in thymus and 40 other cell types or tissues"/>
</dbReference>
<dbReference type="ExpressionAtlas" id="P10300">
    <property type="expression patterns" value="baseline and differential"/>
</dbReference>
<dbReference type="GO" id="GO:0009986">
    <property type="term" value="C:cell surface"/>
    <property type="evidence" value="ECO:0000314"/>
    <property type="project" value="MGI"/>
</dbReference>
<dbReference type="GO" id="GO:0009897">
    <property type="term" value="C:external side of plasma membrane"/>
    <property type="evidence" value="ECO:0000314"/>
    <property type="project" value="MGI"/>
</dbReference>
<dbReference type="GO" id="GO:0005886">
    <property type="term" value="C:plasma membrane"/>
    <property type="evidence" value="ECO:0000314"/>
    <property type="project" value="ComplexPortal"/>
</dbReference>
<dbReference type="GO" id="GO:0043235">
    <property type="term" value="C:receptor complex"/>
    <property type="evidence" value="ECO:0000353"/>
    <property type="project" value="ComplexPortal"/>
</dbReference>
<dbReference type="GO" id="GO:0015026">
    <property type="term" value="F:coreceptor activity"/>
    <property type="evidence" value="ECO:0007669"/>
    <property type="project" value="InterPro"/>
</dbReference>
<dbReference type="GO" id="GO:0042288">
    <property type="term" value="F:MHC class I protein binding"/>
    <property type="evidence" value="ECO:0007669"/>
    <property type="project" value="InterPro"/>
</dbReference>
<dbReference type="GO" id="GO:0002250">
    <property type="term" value="P:adaptive immune response"/>
    <property type="evidence" value="ECO:0000303"/>
    <property type="project" value="ComplexPortal"/>
</dbReference>
<dbReference type="GO" id="GO:0042110">
    <property type="term" value="P:T cell activation"/>
    <property type="evidence" value="ECO:0000266"/>
    <property type="project" value="ComplexPortal"/>
</dbReference>
<dbReference type="GO" id="GO:0050852">
    <property type="term" value="P:T cell receptor signaling pathway"/>
    <property type="evidence" value="ECO:0000266"/>
    <property type="project" value="ComplexPortal"/>
</dbReference>
<dbReference type="CDD" id="cd07700">
    <property type="entry name" value="IgV_CD8_beta"/>
    <property type="match status" value="1"/>
</dbReference>
<dbReference type="FunFam" id="2.60.40.10:FF:000645">
    <property type="entry name" value="T-cell surface glycoprotein CD8 beta chain"/>
    <property type="match status" value="1"/>
</dbReference>
<dbReference type="Gene3D" id="2.60.40.10">
    <property type="entry name" value="Immunoglobulins"/>
    <property type="match status" value="1"/>
</dbReference>
<dbReference type="InterPro" id="IPR042414">
    <property type="entry name" value="CD8B"/>
</dbReference>
<dbReference type="InterPro" id="IPR007110">
    <property type="entry name" value="Ig-like_dom"/>
</dbReference>
<dbReference type="InterPro" id="IPR036179">
    <property type="entry name" value="Ig-like_dom_sf"/>
</dbReference>
<dbReference type="InterPro" id="IPR013783">
    <property type="entry name" value="Ig-like_fold"/>
</dbReference>
<dbReference type="InterPro" id="IPR003599">
    <property type="entry name" value="Ig_sub"/>
</dbReference>
<dbReference type="InterPro" id="IPR013106">
    <property type="entry name" value="Ig_V-set"/>
</dbReference>
<dbReference type="PANTHER" id="PTHR11292">
    <property type="entry name" value="T-CELL SURFACE GLYCOPROTEIN CD8 BETA CHAIN"/>
    <property type="match status" value="1"/>
</dbReference>
<dbReference type="PANTHER" id="PTHR11292:SF7">
    <property type="entry name" value="T-CELL SURFACE GLYCOPROTEIN CD8 BETA CHAIN-RELATED"/>
    <property type="match status" value="1"/>
</dbReference>
<dbReference type="Pfam" id="PF07686">
    <property type="entry name" value="V-set"/>
    <property type="match status" value="1"/>
</dbReference>
<dbReference type="SMART" id="SM00409">
    <property type="entry name" value="IG"/>
    <property type="match status" value="1"/>
</dbReference>
<dbReference type="SMART" id="SM00406">
    <property type="entry name" value="IGv"/>
    <property type="match status" value="1"/>
</dbReference>
<dbReference type="SUPFAM" id="SSF48726">
    <property type="entry name" value="Immunoglobulin"/>
    <property type="match status" value="1"/>
</dbReference>
<dbReference type="PROSITE" id="PS50835">
    <property type="entry name" value="IG_LIKE"/>
    <property type="match status" value="1"/>
</dbReference>
<accession>P10300</accession>
<accession>Q31127</accession>
<accession>Q60966</accession>
<accession>Q61811</accession>
<gene>
    <name type="primary">Cd8b</name>
    <name type="synonym">Cd8b1</name>
    <name type="synonym">Ly-3</name>
    <name type="synonym">Lyt-3</name>
    <name type="synonym">Lyt3</name>
</gene>
<reference key="1">
    <citation type="journal article" date="1988" name="Eur. J. Immunol.">
        <title>Gene transfer of the Ly-3 chain gene of the mouse CD8 molecular complex: co-transfer with the Ly-2 polypeptide gene results in detectable cell surface expression of the Ly-3 antigenic determinants.</title>
        <authorList>
            <person name="Blanc D."/>
            <person name="Bron C."/>
            <person name="Gabert J."/>
            <person name="Letourneur F."/>
            <person name="McDonald H.R."/>
            <person name="Malissen B."/>
        </authorList>
    </citation>
    <scope>NUCLEOTIDE SEQUENCE [MRNA]</scope>
</reference>
<reference key="2">
    <citation type="journal article" date="1988" name="J. Immunol.">
        <title>Molecular linkage of the Ly-3 and Ly-2 genes. Requirement of Ly-2 for Ly-3 surface expression.</title>
        <authorList>
            <person name="Gorman S.D."/>
            <person name="Sun Y.H."/>
            <person name="Zamoyska R."/>
            <person name="Parnes J.R."/>
        </authorList>
    </citation>
    <scope>NUCLEOTIDE SEQUENCE [MRNA]</scope>
</reference>
<reference key="3">
    <citation type="journal article" date="1989" name="J. Immunol.">
        <title>Isolation and characterization of the mouse CD8 beta-chain (Ly-3) genes. Absence of an intervening sequence between V- and J-like gene segments.</title>
        <authorList>
            <person name="Nakayama K."/>
            <person name="Shinkai Y."/>
            <person name="Okumura K."/>
            <person name="Nakauchi H."/>
        </authorList>
    </citation>
    <scope>NUCLEOTIDE SEQUENCE [GENOMIC DNA]</scope>
</reference>
<reference key="4">
    <citation type="journal article" date="1987" name="Proc. Natl. Acad. Sci. U.S.A.">
        <title>Molecular cloning of Lyt-3, a membrane glycoprotein marking a subset of mouse T lymphocytes: molecular homology to immunoglobulin and T-cell receptor variable and joining regions.</title>
        <authorList>
            <person name="Nakauchi H."/>
            <person name="Shinkai Y."/>
            <person name="Okumura K."/>
        </authorList>
    </citation>
    <scope>NUCLEOTIDE SEQUENCE [MRNA]</scope>
</reference>
<reference key="5">
    <citation type="journal article" date="1987" name="Proc. Natl. Acad. Sci. U.S.A.">
        <title>Molecular characterization of the murine cytotoxic T-cell membrane glycoprotein Ly-3 (CD8).</title>
        <authorList>
            <person name="Panaccio M."/>
            <person name="Gillespie M.T."/>
            <person name="Walker I.D."/>
            <person name="Kirszbaum L."/>
            <person name="Sharpe J.A."/>
            <person name="Tobias G.H."/>
            <person name="McKenzie I.F.C."/>
            <person name="Deacon N.J."/>
        </authorList>
    </citation>
    <scope>NUCLEOTIDE SEQUENCE [MRNA]</scope>
    <source>
        <strain>BALB/cJ</strain>
    </source>
</reference>
<reference key="6">
    <citation type="journal article" date="1996" name="Immunogenetics">
        <title>Autoimmune diabetes-prone NOD mice express the Lyt2 alpha (Lyt2.1) and Lyt3 alpha (Lyt3.1) alleles of CD8.</title>
        <authorList>
            <person name="Johnson-Tardieu J.M."/>
            <person name="Walworth E.W."/>
            <person name="Cornelius J.G."/>
            <person name="Ye X."/>
            <person name="Schuster S.M."/>
            <person name="Peck A.B."/>
        </authorList>
    </citation>
    <scope>NUCLEOTIDE SEQUENCE [MRNA] (ALLELE LYT-3-ALPHA)</scope>
    <source>
        <strain>NOD</strain>
        <tissue>Spleen</tissue>
        <tissue>Thymus</tissue>
    </source>
</reference>
<reference key="7">
    <citation type="journal article" date="1988" name="Immunogenetics">
        <title>Structure and expression of the Lyt-3a gene of C.AKR mice.</title>
        <authorList>
            <person name="Youn H.J."/>
            <person name="Harriss J.V."/>
            <person name="Gottlieb P.D."/>
        </authorList>
    </citation>
    <scope>NUCLEOTIDE SEQUENCE [GENOMIC DNA] (ALLELE LYT-3A)</scope>
    <source>
        <strain>C.AKR</strain>
        <tissue>Liver</tissue>
    </source>
</reference>
<reference key="8">
    <citation type="submission" date="1988-06" db="EMBL/GenBank/DDBJ databases">
        <authorList>
            <person name="Deacon N.J."/>
        </authorList>
    </citation>
    <scope>NUCLEOTIDE SEQUENCE [MRNA] OF 205-213</scope>
    <source>
        <strain>BALB/cJ</strain>
        <tissue>Thymus</tissue>
    </source>
</reference>
<reference key="9">
    <citation type="journal article" date="1994" name="Science">
        <title>Requirement for CD8 beta chain in positive selection of CD8-lineage T cells.</title>
        <authorList>
            <person name="Nakayama K."/>
            <person name="Nakayama K."/>
            <person name="Negishi I."/>
            <person name="Kuida K."/>
            <person name="Louie M.C."/>
            <person name="Kanagawa O."/>
            <person name="Nakauchi H."/>
            <person name="Loh D.Y."/>
        </authorList>
    </citation>
    <scope>FUNCTION</scope>
</reference>
<reference key="10">
    <citation type="journal article" date="1994" name="J. Exp. Med.">
        <title>Reduced thymic maturation but normal effector function of CD8+ T cells in CD8 beta gene-targeted mice.</title>
        <authorList>
            <person name="Fung-Leung W.P."/>
            <person name="Kuendig T.M."/>
            <person name="Ngo K."/>
            <person name="Panakos J."/>
            <person name="De Sousa-Hitzler J."/>
            <person name="Wang E."/>
            <person name="Ohashi P.S."/>
            <person name="Mak T.W."/>
            <person name="Lau C.Y."/>
        </authorList>
    </citation>
    <scope>FUNCTION</scope>
    <scope>DISRUPTION PHENOTYPE</scope>
</reference>
<reference key="11">
    <citation type="journal article" date="2003" name="J. Biol. Chem.">
        <title>CD3 delta establishes a functional link between the T cell receptor and CD8.</title>
        <authorList>
            <person name="Doucey M.A."/>
            <person name="Goffin L."/>
            <person name="Naeher D."/>
            <person name="Michielin O."/>
            <person name="Baumgaertner P."/>
            <person name="Guillaume P."/>
            <person name="Palmer E."/>
            <person name="Luescher I.F."/>
        </authorList>
    </citation>
    <scope>FUNCTION</scope>
    <scope>INTERACTION WITH CD3D</scope>
</reference>
<reference key="12">
    <citation type="journal article" date="2009" name="Int. Immunol.">
        <title>CD8beta knockout mice mount normal anti-viral CD8+ T cell responses -- but why?</title>
        <authorList>
            <person name="Angelov G.S."/>
            <person name="Guillaume P."/>
            <person name="Luescher I.F."/>
        </authorList>
    </citation>
    <scope>DISRUPTION PHENOTYPE</scope>
</reference>
<reference key="13">
    <citation type="journal article" date="2005" name="Immunity">
        <title>Structural and mutational analyses of a CD8alphabeta heterodimer and comparison with the CD8alphaalpha homodimer.</title>
        <authorList>
            <person name="Chang H.C."/>
            <person name="Tan K."/>
            <person name="Ouyang J."/>
            <person name="Parisini E."/>
            <person name="Liu J.H."/>
            <person name="Le Y."/>
            <person name="Wang X."/>
            <person name="Reinherz E.L."/>
            <person name="Wang J.H."/>
        </authorList>
    </citation>
    <scope>X-RAY CRYSTALLOGRAPHY (2.4 ANGSTROMS) OF 22-136 IN COMPLEX WITH CD8A</scope>
    <scope>DISULFIDE BOND</scope>
    <scope>SUBUNIT</scope>
</reference>
<reference key="14">
    <citation type="journal article" date="2008" name="J. Mol. Biol.">
        <title>The crystal structure of CD8 in complex with YTS156.7.7 Fab and interaction with other CD8 antibodies define the binding mode of CD8 alphabeta to MHC class I.</title>
        <authorList>
            <person name="Shore D.A."/>
            <person name="Issafras H."/>
            <person name="Landais E."/>
            <person name="Teyton L."/>
            <person name="Wilson I.A."/>
        </authorList>
    </citation>
    <scope>X-RAY CRYSTALLOGRAPHY (2.7 ANGSTROMS) OF 22-138 IN COMPLEX WITH CD8A AND ANTIBODY</scope>
    <scope>SUBUNIT</scope>
    <scope>DISULFIDE BOND</scope>
</reference>
<comment type="function">
    <text evidence="1 4 8 9">Integral membrane glycoprotein that plays an essential role in the immune response and serves multiple functions in responses against both external and internal offenses. In T-cells, functions primarily as a coreceptor for MHC class I molecule:peptide complex. The antigens presented by class I peptides are derived from cytosolic proteins while class II derived from extracellular proteins. Interacts simultaneously with the T-cell receptor (TCR) and the MHC class I proteins presented by antigen presenting cells (APCs). In turn, recruits the Src kinase LCK to the vicinity of the TCR-CD3 complex. A palmitoylation site in the cytoplasmic tail of CD8B chain contributes to partitioning of CD8 into the plasma membrane lipid rafts where signaling proteins are enriched. Once LCK recruited, it initiates different intracellular signaling pathways by phosphorylating various substrates ultimately leading to lymphokine production, motility, adhesion and activation of cytotoxic T-lymphocytes (CTLs). Additionally, plays a critical role in thymic selection of CD8+ T-cells.</text>
</comment>
<comment type="subunit">
    <text evidence="1 4 5 6">Forms disulfide-linked heterodimers with CD8A at the cell surface. Interacts with CD3D; this interaction couples TCR-CD3 with CD8. Interacts with LCK.</text>
</comment>
<comment type="subcellular location">
    <subcellularLocation>
        <location evidence="1">Membrane</location>
        <topology>Single-pass type I membrane protein</topology>
    </subcellularLocation>
    <text evidence="1">Requires the partner CD8A for efficient cell surface expression. The heterodimer CD8A/CD8B localizes to lipid rafts due to CD8B cytoplasmic tail palmitoylation.</text>
</comment>
<comment type="PTM">
    <text evidence="1">Palmitoylated at the cytoplasmic tail and thereby targets the heterodimer CD8A/CD8B to lipid rafts unlike CD8A homodimers.</text>
</comment>
<comment type="disruption phenotype">
    <text evidence="7 8">The lack of Cd8b reduces but does not completely abolish thymic maturation of CD8+ T-cells. However, Cd8-depleted mice mount normal primary cytotoxic CD8 responses upon acute viral infections.</text>
</comment>
<organism>
    <name type="scientific">Mus musculus</name>
    <name type="common">Mouse</name>
    <dbReference type="NCBI Taxonomy" id="10090"/>
    <lineage>
        <taxon>Eukaryota</taxon>
        <taxon>Metazoa</taxon>
        <taxon>Chordata</taxon>
        <taxon>Craniata</taxon>
        <taxon>Vertebrata</taxon>
        <taxon>Euteleostomi</taxon>
        <taxon>Mammalia</taxon>
        <taxon>Eutheria</taxon>
        <taxon>Euarchontoglires</taxon>
        <taxon>Glires</taxon>
        <taxon>Rodentia</taxon>
        <taxon>Myomorpha</taxon>
        <taxon>Muroidea</taxon>
        <taxon>Muridae</taxon>
        <taxon>Murinae</taxon>
        <taxon>Mus</taxon>
        <taxon>Mus</taxon>
    </lineage>
</organism>
<protein>
    <recommendedName>
        <fullName>T-cell surface glycoprotein CD8 beta chain</fullName>
    </recommendedName>
    <alternativeName>
        <fullName>Lymphocyte antigen 3</fullName>
    </alternativeName>
    <alternativeName>
        <fullName>T-cell membrane glycoprotein Ly-3</fullName>
    </alternativeName>
    <alternativeName>
        <fullName>T-cell surface glycoprotein Lyt-3</fullName>
    </alternativeName>
    <cdAntigenName>CD8b</cdAntigenName>
</protein>